<sequence>MKFLLRASSLAGQSLRFASQRPKVFFDVSIGEEPAGRVTMELFNDVVPKTAENFRALCTGEKGVGEQGVALHFKGSKFHRIIPEFMIQGGDFTRHNGTGGESIYGNKFKDENFDLKHTGPGCLSMANAGPNTNGSQFFICTVDTPWLDGGHVVFGQVTDGMSVVKKIEKMGSRSGAPAKTVTIADCGELKSE</sequence>
<proteinExistence type="evidence at transcript level"/>
<name>CYP1_CAEEL</name>
<comment type="function">
    <text>PPIases accelerate the folding of proteins. It catalyzes the cis-trans isomerization of proline imidic peptide bonds in oligopeptides.</text>
</comment>
<comment type="catalytic activity">
    <reaction>
        <text>[protein]-peptidylproline (omega=180) = [protein]-peptidylproline (omega=0)</text>
        <dbReference type="Rhea" id="RHEA:16237"/>
        <dbReference type="Rhea" id="RHEA-COMP:10747"/>
        <dbReference type="Rhea" id="RHEA-COMP:10748"/>
        <dbReference type="ChEBI" id="CHEBI:83833"/>
        <dbReference type="ChEBI" id="CHEBI:83834"/>
        <dbReference type="EC" id="5.2.1.8"/>
    </reaction>
</comment>
<comment type="similarity">
    <text evidence="2">Belongs to the cyclophilin-type PPIase family.</text>
</comment>
<gene>
    <name type="primary">cyn-1</name>
    <name type="synonym">cyp-1</name>
    <name type="ORF">Y49A3A.5</name>
</gene>
<feature type="chain" id="PRO_0000064190" description="Peptidyl-prolyl cis-trans isomerase 1">
    <location>
        <begin position="1"/>
        <end position="192"/>
    </location>
</feature>
<feature type="domain" description="PPIase cyclophilin-type" evidence="1">
    <location>
        <begin position="25"/>
        <end position="188"/>
    </location>
</feature>
<reference key="1">
    <citation type="journal article" date="1996" name="Biochem. J.">
        <title>Cloning and biochemical characterization of the cyclophilin homologues from the free-living nematode Caenorhabditis elegans.</title>
        <authorList>
            <person name="Page A.P."/>
            <person name="Macniven K."/>
            <person name="Hengartner M.O."/>
        </authorList>
    </citation>
    <scope>NUCLEOTIDE SEQUENCE [MRNA]</scope>
    <source>
        <strain>Bristol N2</strain>
    </source>
</reference>
<reference key="2">
    <citation type="journal article" date="1998" name="Science">
        <title>Genome sequence of the nematode C. elegans: a platform for investigating biology.</title>
        <authorList>
            <consortium name="The C. elegans sequencing consortium"/>
        </authorList>
    </citation>
    <scope>NUCLEOTIDE SEQUENCE [LARGE SCALE GENOMIC DNA]</scope>
    <source>
        <strain>Bristol N2</strain>
    </source>
</reference>
<protein>
    <recommendedName>
        <fullName>Peptidyl-prolyl cis-trans isomerase 1</fullName>
        <shortName>PPIase 1</shortName>
        <ecNumber>5.2.1.8</ecNumber>
    </recommendedName>
    <alternativeName>
        <fullName>Cyclophilin-1</fullName>
    </alternativeName>
    <alternativeName>
        <fullName>Rotamase 1</fullName>
    </alternativeName>
</protein>
<organism>
    <name type="scientific">Caenorhabditis elegans</name>
    <dbReference type="NCBI Taxonomy" id="6239"/>
    <lineage>
        <taxon>Eukaryota</taxon>
        <taxon>Metazoa</taxon>
        <taxon>Ecdysozoa</taxon>
        <taxon>Nematoda</taxon>
        <taxon>Chromadorea</taxon>
        <taxon>Rhabditida</taxon>
        <taxon>Rhabditina</taxon>
        <taxon>Rhabditomorpha</taxon>
        <taxon>Rhabditoidea</taxon>
        <taxon>Rhabditidae</taxon>
        <taxon>Peloderinae</taxon>
        <taxon>Caenorhabditis</taxon>
    </lineage>
</organism>
<accession>P52009</accession>
<dbReference type="EC" id="5.2.1.8"/>
<dbReference type="EMBL" id="U30943">
    <property type="protein sequence ID" value="AAC47116.1"/>
    <property type="molecule type" value="mRNA"/>
</dbReference>
<dbReference type="EMBL" id="AL033512">
    <property type="protein sequence ID" value="CAA22075.1"/>
    <property type="molecule type" value="Genomic_DNA"/>
</dbReference>
<dbReference type="PIR" id="T27034">
    <property type="entry name" value="T27034"/>
</dbReference>
<dbReference type="RefSeq" id="NP_506561.1">
    <property type="nucleotide sequence ID" value="NM_074160.7"/>
</dbReference>
<dbReference type="SMR" id="P52009"/>
<dbReference type="BioGRID" id="44940">
    <property type="interactions" value="36"/>
</dbReference>
<dbReference type="FunCoup" id="P52009">
    <property type="interactions" value="1203"/>
</dbReference>
<dbReference type="STRING" id="6239.Y49A3A.5.1"/>
<dbReference type="PaxDb" id="6239-Y49A3A.5"/>
<dbReference type="PeptideAtlas" id="P52009"/>
<dbReference type="EnsemblMetazoa" id="Y49A3A.5.1">
    <property type="protein sequence ID" value="Y49A3A.5.1"/>
    <property type="gene ID" value="WBGene00000877"/>
</dbReference>
<dbReference type="GeneID" id="179936"/>
<dbReference type="KEGG" id="cel:CELE_Y49A3A.5"/>
<dbReference type="UCSC" id="Y49A3A.5.1">
    <property type="organism name" value="c. elegans"/>
</dbReference>
<dbReference type="AGR" id="WB:WBGene00000877"/>
<dbReference type="CTD" id="179936"/>
<dbReference type="WormBase" id="Y49A3A.5">
    <property type="protein sequence ID" value="CE22213"/>
    <property type="gene ID" value="WBGene00000877"/>
    <property type="gene designation" value="cyn-1"/>
</dbReference>
<dbReference type="eggNOG" id="KOG0865">
    <property type="taxonomic scope" value="Eukaryota"/>
</dbReference>
<dbReference type="GeneTree" id="ENSGT00940000168914"/>
<dbReference type="HOGENOM" id="CLU_012062_4_2_1"/>
<dbReference type="InParanoid" id="P52009"/>
<dbReference type="OMA" id="CVSIYGH"/>
<dbReference type="OrthoDB" id="193499at2759"/>
<dbReference type="PhylomeDB" id="P52009"/>
<dbReference type="PRO" id="PR:P52009"/>
<dbReference type="Proteomes" id="UP000001940">
    <property type="component" value="Chromosome V"/>
</dbReference>
<dbReference type="Bgee" id="WBGene00000877">
    <property type="expression patterns" value="Expressed in germ line (C elegans) and 4 other cell types or tissues"/>
</dbReference>
<dbReference type="GO" id="GO:0071013">
    <property type="term" value="C:catalytic step 2 spliceosome"/>
    <property type="evidence" value="ECO:0000318"/>
    <property type="project" value="GO_Central"/>
</dbReference>
<dbReference type="GO" id="GO:0005737">
    <property type="term" value="C:cytoplasm"/>
    <property type="evidence" value="ECO:0000318"/>
    <property type="project" value="GO_Central"/>
</dbReference>
<dbReference type="GO" id="GO:0043231">
    <property type="term" value="C:intracellular membrane-bounded organelle"/>
    <property type="evidence" value="ECO:0000318"/>
    <property type="project" value="GO_Central"/>
</dbReference>
<dbReference type="GO" id="GO:0005739">
    <property type="term" value="C:mitochondrion"/>
    <property type="evidence" value="ECO:0007005"/>
    <property type="project" value="WormBase"/>
</dbReference>
<dbReference type="GO" id="GO:0016018">
    <property type="term" value="F:cyclosporin A binding"/>
    <property type="evidence" value="ECO:0000318"/>
    <property type="project" value="GO_Central"/>
</dbReference>
<dbReference type="GO" id="GO:0003755">
    <property type="term" value="F:peptidyl-prolyl cis-trans isomerase activity"/>
    <property type="evidence" value="ECO:0000318"/>
    <property type="project" value="GO_Central"/>
</dbReference>
<dbReference type="GO" id="GO:0006457">
    <property type="term" value="P:protein folding"/>
    <property type="evidence" value="ECO:0000318"/>
    <property type="project" value="GO_Central"/>
</dbReference>
<dbReference type="CDD" id="cd01926">
    <property type="entry name" value="cyclophilin_ABH_like"/>
    <property type="match status" value="1"/>
</dbReference>
<dbReference type="FunFam" id="2.40.100.10:FF:000002">
    <property type="entry name" value="Peptidyl-prolyl cis-trans isomerase"/>
    <property type="match status" value="1"/>
</dbReference>
<dbReference type="Gene3D" id="2.40.100.10">
    <property type="entry name" value="Cyclophilin-like"/>
    <property type="match status" value="1"/>
</dbReference>
<dbReference type="InterPro" id="IPR029000">
    <property type="entry name" value="Cyclophilin-like_dom_sf"/>
</dbReference>
<dbReference type="InterPro" id="IPR024936">
    <property type="entry name" value="Cyclophilin-type_PPIase"/>
</dbReference>
<dbReference type="InterPro" id="IPR020892">
    <property type="entry name" value="Cyclophilin-type_PPIase_CS"/>
</dbReference>
<dbReference type="InterPro" id="IPR002130">
    <property type="entry name" value="Cyclophilin-type_PPIase_dom"/>
</dbReference>
<dbReference type="PANTHER" id="PTHR11071">
    <property type="entry name" value="PEPTIDYL-PROLYL CIS-TRANS ISOMERASE"/>
    <property type="match status" value="1"/>
</dbReference>
<dbReference type="PANTHER" id="PTHR11071:SF561">
    <property type="entry name" value="PEPTIDYL-PROLYL CIS-TRANS ISOMERASE D-RELATED"/>
    <property type="match status" value="1"/>
</dbReference>
<dbReference type="Pfam" id="PF00160">
    <property type="entry name" value="Pro_isomerase"/>
    <property type="match status" value="1"/>
</dbReference>
<dbReference type="PIRSF" id="PIRSF001467">
    <property type="entry name" value="Peptidylpro_ismrse"/>
    <property type="match status" value="1"/>
</dbReference>
<dbReference type="PRINTS" id="PR00153">
    <property type="entry name" value="CSAPPISMRASE"/>
</dbReference>
<dbReference type="SUPFAM" id="SSF50891">
    <property type="entry name" value="Cyclophilin-like"/>
    <property type="match status" value="1"/>
</dbReference>
<dbReference type="PROSITE" id="PS00170">
    <property type="entry name" value="CSA_PPIASE_1"/>
    <property type="match status" value="1"/>
</dbReference>
<dbReference type="PROSITE" id="PS50072">
    <property type="entry name" value="CSA_PPIASE_2"/>
    <property type="match status" value="1"/>
</dbReference>
<keyword id="KW-0413">Isomerase</keyword>
<keyword id="KW-1185">Reference proteome</keyword>
<keyword id="KW-0697">Rotamase</keyword>
<evidence type="ECO:0000255" key="1">
    <source>
        <dbReference type="PROSITE-ProRule" id="PRU00156"/>
    </source>
</evidence>
<evidence type="ECO:0000305" key="2"/>